<gene>
    <name evidence="1" type="primary">truD</name>
    <name type="ordered locus">HPG27_875</name>
</gene>
<evidence type="ECO:0000255" key="1">
    <source>
        <dbReference type="HAMAP-Rule" id="MF_01082"/>
    </source>
</evidence>
<dbReference type="EC" id="5.4.99.27" evidence="1"/>
<dbReference type="EMBL" id="CP001173">
    <property type="protein sequence ID" value="ACI27629.1"/>
    <property type="molecule type" value="Genomic_DNA"/>
</dbReference>
<dbReference type="RefSeq" id="WP_001052359.1">
    <property type="nucleotide sequence ID" value="NC_011333.1"/>
</dbReference>
<dbReference type="SMR" id="B5Z7T0"/>
<dbReference type="KEGG" id="hpg:HPG27_875"/>
<dbReference type="HOGENOM" id="CLU_005281_4_0_7"/>
<dbReference type="Proteomes" id="UP000001735">
    <property type="component" value="Chromosome"/>
</dbReference>
<dbReference type="GO" id="GO:0005829">
    <property type="term" value="C:cytosol"/>
    <property type="evidence" value="ECO:0007669"/>
    <property type="project" value="TreeGrafter"/>
</dbReference>
<dbReference type="GO" id="GO:0003723">
    <property type="term" value="F:RNA binding"/>
    <property type="evidence" value="ECO:0007669"/>
    <property type="project" value="InterPro"/>
</dbReference>
<dbReference type="GO" id="GO:0160150">
    <property type="term" value="F:tRNA pseudouridine(13) synthase activity"/>
    <property type="evidence" value="ECO:0007669"/>
    <property type="project" value="UniProtKB-EC"/>
</dbReference>
<dbReference type="GO" id="GO:0031119">
    <property type="term" value="P:tRNA pseudouridine synthesis"/>
    <property type="evidence" value="ECO:0007669"/>
    <property type="project" value="UniProtKB-UniRule"/>
</dbReference>
<dbReference type="CDD" id="cd02575">
    <property type="entry name" value="PseudoU_synth_EcTruD"/>
    <property type="match status" value="1"/>
</dbReference>
<dbReference type="FunFam" id="3.30.2350.20:FF:000008">
    <property type="entry name" value="tRNA pseudouridine synthase D"/>
    <property type="match status" value="1"/>
</dbReference>
<dbReference type="Gene3D" id="3.30.2350.20">
    <property type="entry name" value="TruD, catalytic domain"/>
    <property type="match status" value="2"/>
</dbReference>
<dbReference type="Gene3D" id="3.30.2340.10">
    <property type="entry name" value="TruD, insertion domain"/>
    <property type="match status" value="2"/>
</dbReference>
<dbReference type="HAMAP" id="MF_01082">
    <property type="entry name" value="TruD"/>
    <property type="match status" value="1"/>
</dbReference>
<dbReference type="InterPro" id="IPR020103">
    <property type="entry name" value="PsdUridine_synth_cat_dom_sf"/>
</dbReference>
<dbReference type="InterPro" id="IPR001656">
    <property type="entry name" value="PsdUridine_synth_TruD"/>
</dbReference>
<dbReference type="InterPro" id="IPR020119">
    <property type="entry name" value="PsdUridine_synth_TruD_CS"/>
</dbReference>
<dbReference type="InterPro" id="IPR011760">
    <property type="entry name" value="PsdUridine_synth_TruD_insert"/>
</dbReference>
<dbReference type="InterPro" id="IPR042214">
    <property type="entry name" value="TruD_catalytic"/>
</dbReference>
<dbReference type="InterPro" id="IPR043165">
    <property type="entry name" value="TruD_insert_sf"/>
</dbReference>
<dbReference type="InterPro" id="IPR050170">
    <property type="entry name" value="TruD_pseudoU_synthase"/>
</dbReference>
<dbReference type="NCBIfam" id="NF002154">
    <property type="entry name" value="PRK00984.1-3"/>
    <property type="match status" value="1"/>
</dbReference>
<dbReference type="NCBIfam" id="TIGR00094">
    <property type="entry name" value="tRNA_TruD_broad"/>
    <property type="match status" value="1"/>
</dbReference>
<dbReference type="PANTHER" id="PTHR47811">
    <property type="entry name" value="TRNA PSEUDOURIDINE SYNTHASE D"/>
    <property type="match status" value="1"/>
</dbReference>
<dbReference type="PANTHER" id="PTHR47811:SF1">
    <property type="entry name" value="TRNA PSEUDOURIDINE SYNTHASE D"/>
    <property type="match status" value="1"/>
</dbReference>
<dbReference type="Pfam" id="PF01142">
    <property type="entry name" value="TruD"/>
    <property type="match status" value="1"/>
</dbReference>
<dbReference type="PIRSF" id="PIRSF037016">
    <property type="entry name" value="Pseudouridin_synth_euk_prd"/>
    <property type="match status" value="1"/>
</dbReference>
<dbReference type="SUPFAM" id="SSF55120">
    <property type="entry name" value="Pseudouridine synthase"/>
    <property type="match status" value="1"/>
</dbReference>
<dbReference type="PROSITE" id="PS50984">
    <property type="entry name" value="TRUD"/>
    <property type="match status" value="1"/>
</dbReference>
<dbReference type="PROSITE" id="PS01268">
    <property type="entry name" value="UPF0024"/>
    <property type="match status" value="1"/>
</dbReference>
<organism>
    <name type="scientific">Helicobacter pylori (strain G27)</name>
    <dbReference type="NCBI Taxonomy" id="563041"/>
    <lineage>
        <taxon>Bacteria</taxon>
        <taxon>Pseudomonadati</taxon>
        <taxon>Campylobacterota</taxon>
        <taxon>Epsilonproteobacteria</taxon>
        <taxon>Campylobacterales</taxon>
        <taxon>Helicobacteraceae</taxon>
        <taxon>Helicobacter</taxon>
    </lineage>
</organism>
<feature type="chain" id="PRO_1000136841" description="tRNA pseudouridine synthase D">
    <location>
        <begin position="1"/>
        <end position="381"/>
    </location>
</feature>
<feature type="domain" description="TRUD" evidence="1">
    <location>
        <begin position="160"/>
        <end position="335"/>
    </location>
</feature>
<feature type="active site" description="Nucleophile" evidence="1">
    <location>
        <position position="81"/>
    </location>
</feature>
<name>TRUD_HELPG</name>
<keyword id="KW-0413">Isomerase</keyword>
<keyword id="KW-1185">Reference proteome</keyword>
<keyword id="KW-0819">tRNA processing</keyword>
<proteinExistence type="inferred from homology"/>
<reference key="1">
    <citation type="journal article" date="2009" name="J. Bacteriol.">
        <title>The complete genome sequence of Helicobacter pylori strain G27.</title>
        <authorList>
            <person name="Baltrus D.A."/>
            <person name="Amieva M.R."/>
            <person name="Covacci A."/>
            <person name="Lowe T.M."/>
            <person name="Merrell D.S."/>
            <person name="Ottemann K.M."/>
            <person name="Stein M."/>
            <person name="Salama N.R."/>
            <person name="Guillemin K."/>
        </authorList>
    </citation>
    <scope>NUCLEOTIDE SEQUENCE [LARGE SCALE GENOMIC DNA]</scope>
    <source>
        <strain>G27</strain>
    </source>
</reference>
<protein>
    <recommendedName>
        <fullName evidence="1">tRNA pseudouridine synthase D</fullName>
        <ecNumber evidence="1">5.4.99.27</ecNumber>
    </recommendedName>
    <alternativeName>
        <fullName evidence="1">tRNA pseudouridine(13) synthase</fullName>
    </alternativeName>
    <alternativeName>
        <fullName evidence="1">tRNA pseudouridylate synthase D</fullName>
    </alternativeName>
    <alternativeName>
        <fullName evidence="1">tRNA-uridine isomerase D</fullName>
    </alternativeName>
</protein>
<accession>B5Z7T0</accession>
<sequence>MNLNFMPLLHAYNHASIDFHFNSSARDFCVHEVPLYEFSNTGEHAVIQVRKSGLSTLEMLHIFSQILGVKIAELGYAGLKDKNALTTQFISLPKKYAPLLEKNTSNFQERNLKVLSLNYHHNKIKLGHLKGNRFFMRFKKMTPLNAQKTKQVLEQIAQFGMPNYFGSQRFGKFNDNHKEGLKILQNKTKFAHQKLNAFLISSYQSYLFNSLLSKRLEISKIISDFSVKENLEFFKQKNLSVNSNALKALKNQAHPFKILEGDVMCHYPYGKFFDALKLEKESERFLKKEAVPTGLLDGKKALYAKNLSLEIEKEFQHNLLSSHAKTLGSRRFFWVFAENVTSQYIKEKAQFELGFYLPKGSYASALLKEIKHEKGENNDEF</sequence>
<comment type="function">
    <text evidence="1">Responsible for synthesis of pseudouridine from uracil-13 in transfer RNAs.</text>
</comment>
<comment type="catalytic activity">
    <reaction evidence="1">
        <text>uridine(13) in tRNA = pseudouridine(13) in tRNA</text>
        <dbReference type="Rhea" id="RHEA:42540"/>
        <dbReference type="Rhea" id="RHEA-COMP:10105"/>
        <dbReference type="Rhea" id="RHEA-COMP:10106"/>
        <dbReference type="ChEBI" id="CHEBI:65314"/>
        <dbReference type="ChEBI" id="CHEBI:65315"/>
        <dbReference type="EC" id="5.4.99.27"/>
    </reaction>
</comment>
<comment type="similarity">
    <text evidence="1">Belongs to the pseudouridine synthase TruD family.</text>
</comment>